<gene>
    <name evidence="1" type="primary">deoC</name>
    <name type="ordered locus">Sfri_1002</name>
</gene>
<protein>
    <recommendedName>
        <fullName evidence="1">Deoxyribose-phosphate aldolase</fullName>
        <shortName evidence="1">DERA</shortName>
        <ecNumber evidence="1">4.1.2.4</ecNumber>
    </recommendedName>
    <alternativeName>
        <fullName evidence="1">2-deoxy-D-ribose 5-phosphate aldolase</fullName>
    </alternativeName>
    <alternativeName>
        <fullName evidence="1">Phosphodeoxyriboaldolase</fullName>
        <shortName evidence="1">Deoxyriboaldolase</shortName>
    </alternativeName>
</protein>
<keyword id="KW-0963">Cytoplasm</keyword>
<keyword id="KW-0456">Lyase</keyword>
<keyword id="KW-1185">Reference proteome</keyword>
<keyword id="KW-0704">Schiff base</keyword>
<comment type="function">
    <text evidence="1">Catalyzes a reversible aldol reaction between acetaldehyde and D-glyceraldehyde 3-phosphate to generate 2-deoxy-D-ribose 5-phosphate.</text>
</comment>
<comment type="catalytic activity">
    <reaction evidence="1">
        <text>2-deoxy-D-ribose 5-phosphate = D-glyceraldehyde 3-phosphate + acetaldehyde</text>
        <dbReference type="Rhea" id="RHEA:12821"/>
        <dbReference type="ChEBI" id="CHEBI:15343"/>
        <dbReference type="ChEBI" id="CHEBI:59776"/>
        <dbReference type="ChEBI" id="CHEBI:62877"/>
        <dbReference type="EC" id="4.1.2.4"/>
    </reaction>
</comment>
<comment type="pathway">
    <text evidence="1">Carbohydrate degradation; 2-deoxy-D-ribose 1-phosphate degradation; D-glyceraldehyde 3-phosphate and acetaldehyde from 2-deoxy-alpha-D-ribose 1-phosphate: step 2/2.</text>
</comment>
<comment type="subcellular location">
    <subcellularLocation>
        <location evidence="1">Cytoplasm</location>
    </subcellularLocation>
</comment>
<comment type="similarity">
    <text evidence="1">Belongs to the DeoC/FbaB aldolase family. DeoC type 2 subfamily.</text>
</comment>
<name>DEOC_SHEFN</name>
<dbReference type="EC" id="4.1.2.4" evidence="1"/>
<dbReference type="EMBL" id="CP000447">
    <property type="protein sequence ID" value="ABI70855.1"/>
    <property type="molecule type" value="Genomic_DNA"/>
</dbReference>
<dbReference type="RefSeq" id="WP_011636476.1">
    <property type="nucleotide sequence ID" value="NC_008345.1"/>
</dbReference>
<dbReference type="SMR" id="Q086G0"/>
<dbReference type="STRING" id="318167.Sfri_1002"/>
<dbReference type="KEGG" id="sfr:Sfri_1002"/>
<dbReference type="eggNOG" id="COG0274">
    <property type="taxonomic scope" value="Bacteria"/>
</dbReference>
<dbReference type="HOGENOM" id="CLU_053595_3_1_6"/>
<dbReference type="OrthoDB" id="6579831at2"/>
<dbReference type="UniPathway" id="UPA00002">
    <property type="reaction ID" value="UER00468"/>
</dbReference>
<dbReference type="Proteomes" id="UP000000684">
    <property type="component" value="Chromosome"/>
</dbReference>
<dbReference type="GO" id="GO:0005737">
    <property type="term" value="C:cytoplasm"/>
    <property type="evidence" value="ECO:0007669"/>
    <property type="project" value="UniProtKB-SubCell"/>
</dbReference>
<dbReference type="GO" id="GO:0004139">
    <property type="term" value="F:deoxyribose-phosphate aldolase activity"/>
    <property type="evidence" value="ECO:0007669"/>
    <property type="project" value="UniProtKB-UniRule"/>
</dbReference>
<dbReference type="GO" id="GO:0006018">
    <property type="term" value="P:2-deoxyribose 1-phosphate catabolic process"/>
    <property type="evidence" value="ECO:0007669"/>
    <property type="project" value="UniProtKB-UniRule"/>
</dbReference>
<dbReference type="GO" id="GO:0016052">
    <property type="term" value="P:carbohydrate catabolic process"/>
    <property type="evidence" value="ECO:0007669"/>
    <property type="project" value="TreeGrafter"/>
</dbReference>
<dbReference type="GO" id="GO:0009264">
    <property type="term" value="P:deoxyribonucleotide catabolic process"/>
    <property type="evidence" value="ECO:0007669"/>
    <property type="project" value="InterPro"/>
</dbReference>
<dbReference type="CDD" id="cd00959">
    <property type="entry name" value="DeoC"/>
    <property type="match status" value="1"/>
</dbReference>
<dbReference type="Gene3D" id="3.20.20.70">
    <property type="entry name" value="Aldolase class I"/>
    <property type="match status" value="1"/>
</dbReference>
<dbReference type="HAMAP" id="MF_00592">
    <property type="entry name" value="DeoC_type2"/>
    <property type="match status" value="1"/>
</dbReference>
<dbReference type="InterPro" id="IPR013785">
    <property type="entry name" value="Aldolase_TIM"/>
</dbReference>
<dbReference type="InterPro" id="IPR011343">
    <property type="entry name" value="DeoC"/>
</dbReference>
<dbReference type="InterPro" id="IPR002915">
    <property type="entry name" value="DeoC/FbaB/LacD_aldolase"/>
</dbReference>
<dbReference type="InterPro" id="IPR023649">
    <property type="entry name" value="DeoC_typeII"/>
</dbReference>
<dbReference type="NCBIfam" id="TIGR00126">
    <property type="entry name" value="deoC"/>
    <property type="match status" value="1"/>
</dbReference>
<dbReference type="PANTHER" id="PTHR10889">
    <property type="entry name" value="DEOXYRIBOSE-PHOSPHATE ALDOLASE"/>
    <property type="match status" value="1"/>
</dbReference>
<dbReference type="PANTHER" id="PTHR10889:SF3">
    <property type="entry name" value="DEOXYRIBOSE-PHOSPHATE ALDOLASE"/>
    <property type="match status" value="1"/>
</dbReference>
<dbReference type="Pfam" id="PF01791">
    <property type="entry name" value="DeoC"/>
    <property type="match status" value="1"/>
</dbReference>
<dbReference type="PIRSF" id="PIRSF001357">
    <property type="entry name" value="DeoC"/>
    <property type="match status" value="1"/>
</dbReference>
<dbReference type="SMART" id="SM01133">
    <property type="entry name" value="DeoC"/>
    <property type="match status" value="1"/>
</dbReference>
<dbReference type="SUPFAM" id="SSF51569">
    <property type="entry name" value="Aldolase"/>
    <property type="match status" value="1"/>
</dbReference>
<reference key="1">
    <citation type="submission" date="2006-08" db="EMBL/GenBank/DDBJ databases">
        <title>Complete sequence of Shewanella frigidimarina NCIMB 400.</title>
        <authorList>
            <consortium name="US DOE Joint Genome Institute"/>
            <person name="Copeland A."/>
            <person name="Lucas S."/>
            <person name="Lapidus A."/>
            <person name="Barry K."/>
            <person name="Detter J.C."/>
            <person name="Glavina del Rio T."/>
            <person name="Hammon N."/>
            <person name="Israni S."/>
            <person name="Dalin E."/>
            <person name="Tice H."/>
            <person name="Pitluck S."/>
            <person name="Fredrickson J.K."/>
            <person name="Kolker E."/>
            <person name="McCuel L.A."/>
            <person name="DiChristina T."/>
            <person name="Nealson K.H."/>
            <person name="Newman D."/>
            <person name="Tiedje J.M."/>
            <person name="Zhou J."/>
            <person name="Romine M.F."/>
            <person name="Culley D.E."/>
            <person name="Serres M."/>
            <person name="Chertkov O."/>
            <person name="Brettin T."/>
            <person name="Bruce D."/>
            <person name="Han C."/>
            <person name="Tapia R."/>
            <person name="Gilna P."/>
            <person name="Schmutz J."/>
            <person name="Larimer F."/>
            <person name="Land M."/>
            <person name="Hauser L."/>
            <person name="Kyrpides N."/>
            <person name="Mikhailova N."/>
            <person name="Richardson P."/>
        </authorList>
    </citation>
    <scope>NUCLEOTIDE SEQUENCE [LARGE SCALE GENOMIC DNA]</scope>
    <source>
        <strain>NCIMB 400</strain>
    </source>
</reference>
<sequence length="257" mass="27669">MTDLKKAAQRGIELMDLTTLNDDDTDQKVIDLCHKAKSPAGNTAAICIYPRFIPIARKTLNELDCEDIKIATVTNFPHGNDDIAIAVLETRAAVAYGADEVDVVFPYRALMDGNETVGFEMVKACKEECGDDAILKVIIESGVLKDPALIRKASELAIDAGADFIKTSTGKVPVNATLEAAEIMLTVISEKNRNVGFKPAGGVRDAAQTAEFLDLAARILGDDWVTPQTFRFGASSLLNSLLHTLELVDAPKPTSGY</sequence>
<feature type="chain" id="PRO_1000072605" description="Deoxyribose-phosphate aldolase">
    <location>
        <begin position="1"/>
        <end position="257"/>
    </location>
</feature>
<feature type="active site" description="Proton donor/acceptor" evidence="1">
    <location>
        <position position="102"/>
    </location>
</feature>
<feature type="active site" description="Schiff-base intermediate with acetaldehyde" evidence="1">
    <location>
        <position position="166"/>
    </location>
</feature>
<feature type="active site" description="Proton donor/acceptor" evidence="1">
    <location>
        <position position="198"/>
    </location>
</feature>
<evidence type="ECO:0000255" key="1">
    <source>
        <dbReference type="HAMAP-Rule" id="MF_00592"/>
    </source>
</evidence>
<organism>
    <name type="scientific">Shewanella frigidimarina (strain NCIMB 400)</name>
    <dbReference type="NCBI Taxonomy" id="318167"/>
    <lineage>
        <taxon>Bacteria</taxon>
        <taxon>Pseudomonadati</taxon>
        <taxon>Pseudomonadota</taxon>
        <taxon>Gammaproteobacteria</taxon>
        <taxon>Alteromonadales</taxon>
        <taxon>Shewanellaceae</taxon>
        <taxon>Shewanella</taxon>
    </lineage>
</organism>
<proteinExistence type="inferred from homology"/>
<accession>Q086G0</accession>